<keyword id="KW-0325">Glycoprotein</keyword>
<keyword id="KW-0472">Membrane</keyword>
<keyword id="KW-0675">Receptor</keyword>
<keyword id="KW-1185">Reference proteome</keyword>
<keyword id="KW-0812">Transmembrane</keyword>
<keyword id="KW-1133">Transmembrane helix</keyword>
<comment type="function">
    <text evidence="1">Plays a role in the control of cellular growth (By similarity). May have a role in epidermal development. May act as a receptor for Sonic hedgehog (SHH).</text>
</comment>
<comment type="subcellular location">
    <subcellularLocation>
        <location>Membrane</location>
        <topology>Multi-pass membrane protein</topology>
    </subcellularLocation>
</comment>
<comment type="tissue specificity">
    <text>Expressed in epithelial cells of the developing hair, tooth and whisker.</text>
</comment>
<comment type="developmental stage">
    <text>Detected in 8.5 to 17.5 dpc embryos.</text>
</comment>
<comment type="similarity">
    <text evidence="4">Belongs to the patched family.</text>
</comment>
<protein>
    <recommendedName>
        <fullName>Protein patched homolog 2</fullName>
        <shortName>PTC2</shortName>
    </recommendedName>
</protein>
<feature type="chain" id="PRO_0000205971" description="Protein patched homolog 2">
    <location>
        <begin position="1"/>
        <end position="1182"/>
    </location>
</feature>
<feature type="topological domain" description="Cytoplasmic" evidence="2">
    <location>
        <begin position="1"/>
        <end position="57"/>
    </location>
</feature>
<feature type="transmembrane region" description="Helical" evidence="2">
    <location>
        <begin position="58"/>
        <end position="78"/>
    </location>
</feature>
<feature type="topological domain" description="Extracellular" evidence="2">
    <location>
        <begin position="79"/>
        <end position="394"/>
    </location>
</feature>
<feature type="transmembrane region" description="Helical" evidence="2">
    <location>
        <begin position="395"/>
        <end position="414"/>
    </location>
</feature>
<feature type="topological domain" description="Cytoplasmic" evidence="2">
    <location>
        <begin position="415"/>
        <end position="428"/>
    </location>
</feature>
<feature type="transmembrane region" description="Helical" evidence="2">
    <location>
        <begin position="429"/>
        <end position="449"/>
    </location>
</feature>
<feature type="topological domain" description="Extracellular" evidence="2">
    <location>
        <begin position="450"/>
        <end position="457"/>
    </location>
</feature>
<feature type="transmembrane region" description="Helical" evidence="2">
    <location>
        <begin position="458"/>
        <end position="478"/>
    </location>
</feature>
<feature type="topological domain" description="Cytoplasmic" evidence="2">
    <location>
        <begin position="479"/>
        <end position="501"/>
    </location>
</feature>
<feature type="transmembrane region" description="Helical" evidence="2">
    <location>
        <begin position="502"/>
        <end position="522"/>
    </location>
</feature>
<feature type="topological domain" description="Extracellular" evidence="2">
    <location>
        <begin position="523"/>
        <end position="531"/>
    </location>
</feature>
<feature type="transmembrane region" description="Helical" evidence="2">
    <location>
        <begin position="532"/>
        <end position="552"/>
    </location>
</feature>
<feature type="topological domain" description="Cytoplasmic" evidence="2">
    <location>
        <begin position="553"/>
        <end position="686"/>
    </location>
</feature>
<feature type="transmembrane region" description="Helical" evidence="2">
    <location>
        <begin position="687"/>
        <end position="707"/>
    </location>
</feature>
<feature type="topological domain" description="Extracellular" evidence="2">
    <location>
        <begin position="708"/>
        <end position="963"/>
    </location>
</feature>
<feature type="transmembrane region" description="Helical" evidence="2">
    <location>
        <begin position="964"/>
        <end position="984"/>
    </location>
</feature>
<feature type="topological domain" description="Cytoplasmic" evidence="2">
    <location>
        <begin position="985"/>
        <end position="991"/>
    </location>
</feature>
<feature type="transmembrane region" description="Helical" evidence="2">
    <location>
        <begin position="992"/>
        <end position="1012"/>
    </location>
</feature>
<feature type="topological domain" description="Extracellular" evidence="2">
    <location>
        <position position="1013"/>
    </location>
</feature>
<feature type="transmembrane region" description="Helical" evidence="2">
    <location>
        <begin position="1014"/>
        <end position="1034"/>
    </location>
</feature>
<feature type="topological domain" description="Cytoplasmic" evidence="2">
    <location>
        <begin position="1035"/>
        <end position="1064"/>
    </location>
</feature>
<feature type="transmembrane region" description="Helical" evidence="2">
    <location>
        <begin position="1065"/>
        <end position="1085"/>
    </location>
</feature>
<feature type="topological domain" description="Extracellular" evidence="2">
    <location>
        <position position="1086"/>
    </location>
</feature>
<feature type="transmembrane region" description="Helical" evidence="2">
    <location>
        <begin position="1087"/>
        <end position="1107"/>
    </location>
</feature>
<feature type="topological domain" description="Cytoplasmic" evidence="2">
    <location>
        <begin position="1108"/>
        <end position="1182"/>
    </location>
</feature>
<feature type="domain" description="SSD" evidence="3">
    <location>
        <begin position="394"/>
        <end position="552"/>
    </location>
</feature>
<feature type="glycosylation site" description="N-linked (GlcNAc...) asparagine" evidence="2">
    <location>
        <position position="370"/>
    </location>
</feature>
<feature type="glycosylation site" description="N-linked (GlcNAc...) asparagine" evidence="2">
    <location>
        <position position="812"/>
    </location>
</feature>
<organism>
    <name type="scientific">Mus musculus</name>
    <name type="common">Mouse</name>
    <dbReference type="NCBI Taxonomy" id="10090"/>
    <lineage>
        <taxon>Eukaryota</taxon>
        <taxon>Metazoa</taxon>
        <taxon>Chordata</taxon>
        <taxon>Craniata</taxon>
        <taxon>Vertebrata</taxon>
        <taxon>Euteleostomi</taxon>
        <taxon>Mammalia</taxon>
        <taxon>Eutheria</taxon>
        <taxon>Euarchontoglires</taxon>
        <taxon>Glires</taxon>
        <taxon>Rodentia</taxon>
        <taxon>Myomorpha</taxon>
        <taxon>Muroidea</taxon>
        <taxon>Muridae</taxon>
        <taxon>Murinae</taxon>
        <taxon>Mus</taxon>
        <taxon>Mus</taxon>
    </lineage>
</organism>
<dbReference type="EMBL" id="AJ133482">
    <property type="protein sequence ID" value="CAC88120.1"/>
    <property type="molecule type" value="Genomic_DNA"/>
</dbReference>
<dbReference type="EMBL" id="AJ133483">
    <property type="protein sequence ID" value="CAC88120.1"/>
    <property type="status" value="JOINED"/>
    <property type="molecule type" value="Genomic_DNA"/>
</dbReference>
<dbReference type="EMBL" id="AJ133484">
    <property type="protein sequence ID" value="CAC88120.1"/>
    <property type="status" value="JOINED"/>
    <property type="molecule type" value="Genomic_DNA"/>
</dbReference>
<dbReference type="EMBL" id="AJ133485">
    <property type="protein sequence ID" value="CAC88120.1"/>
    <property type="status" value="JOINED"/>
    <property type="molecule type" value="Genomic_DNA"/>
</dbReference>
<dbReference type="EMBL" id="AL671866">
    <property type="status" value="NOT_ANNOTATED_CDS"/>
    <property type="molecule type" value="Genomic_DNA"/>
</dbReference>
<dbReference type="EMBL" id="AB010833">
    <property type="protein sequence ID" value="BAA24691.1"/>
    <property type="molecule type" value="mRNA"/>
</dbReference>
<dbReference type="CCDS" id="CCDS18526.1"/>
<dbReference type="PIR" id="T13952">
    <property type="entry name" value="T13952"/>
</dbReference>
<dbReference type="RefSeq" id="NP_032984.1">
    <property type="nucleotide sequence ID" value="NM_008958.3"/>
</dbReference>
<dbReference type="SMR" id="O35595"/>
<dbReference type="FunCoup" id="O35595">
    <property type="interactions" value="475"/>
</dbReference>
<dbReference type="STRING" id="10090.ENSMUSP00000030443"/>
<dbReference type="GlyCosmos" id="O35595">
    <property type="glycosylation" value="2 sites, No reported glycans"/>
</dbReference>
<dbReference type="GlyGen" id="O35595">
    <property type="glycosylation" value="2 sites"/>
</dbReference>
<dbReference type="iPTMnet" id="O35595"/>
<dbReference type="PhosphoSitePlus" id="O35595"/>
<dbReference type="PaxDb" id="10090-ENSMUSP00000030443"/>
<dbReference type="ProteomicsDB" id="301894"/>
<dbReference type="Antibodypedia" id="18516">
    <property type="antibodies" value="165 antibodies from 26 providers"/>
</dbReference>
<dbReference type="DNASU" id="19207"/>
<dbReference type="Ensembl" id="ENSMUST00000030443.12">
    <property type="protein sequence ID" value="ENSMUSP00000030443.6"/>
    <property type="gene ID" value="ENSMUSG00000028681.12"/>
</dbReference>
<dbReference type="GeneID" id="19207"/>
<dbReference type="KEGG" id="mmu:19207"/>
<dbReference type="UCSC" id="uc008uhx.1">
    <property type="organism name" value="mouse"/>
</dbReference>
<dbReference type="AGR" id="MGI:1095405"/>
<dbReference type="CTD" id="8643"/>
<dbReference type="MGI" id="MGI:1095405">
    <property type="gene designation" value="Ptch2"/>
</dbReference>
<dbReference type="VEuPathDB" id="HostDB:ENSMUSG00000028681"/>
<dbReference type="eggNOG" id="KOG1935">
    <property type="taxonomic scope" value="Eukaryota"/>
</dbReference>
<dbReference type="GeneTree" id="ENSGT00940000159901"/>
<dbReference type="HOGENOM" id="CLU_002506_0_0_1"/>
<dbReference type="InParanoid" id="O35595"/>
<dbReference type="OMA" id="PINHHSF"/>
<dbReference type="OrthoDB" id="5873834at2759"/>
<dbReference type="PhylomeDB" id="O35595"/>
<dbReference type="TreeFam" id="TF106489"/>
<dbReference type="BioGRID-ORCS" id="19207">
    <property type="hits" value="2 hits in 77 CRISPR screens"/>
</dbReference>
<dbReference type="PRO" id="PR:O35595"/>
<dbReference type="Proteomes" id="UP000000589">
    <property type="component" value="Chromosome 4"/>
</dbReference>
<dbReference type="RNAct" id="O35595">
    <property type="molecule type" value="protein"/>
</dbReference>
<dbReference type="Bgee" id="ENSMUSG00000028681">
    <property type="expression patterns" value="Expressed in ciliary body and 190 other cell types or tissues"/>
</dbReference>
<dbReference type="ExpressionAtlas" id="O35595">
    <property type="expression patterns" value="baseline and differential"/>
</dbReference>
<dbReference type="GO" id="GO:0016020">
    <property type="term" value="C:membrane"/>
    <property type="evidence" value="ECO:0007669"/>
    <property type="project" value="UniProtKB-SubCell"/>
</dbReference>
<dbReference type="GO" id="GO:0097108">
    <property type="term" value="F:hedgehog family protein binding"/>
    <property type="evidence" value="ECO:0007669"/>
    <property type="project" value="Ensembl"/>
</dbReference>
<dbReference type="GO" id="GO:0008158">
    <property type="term" value="F:hedgehog receptor activity"/>
    <property type="evidence" value="ECO:0007669"/>
    <property type="project" value="InterPro"/>
</dbReference>
<dbReference type="GO" id="GO:0005119">
    <property type="term" value="F:smoothened binding"/>
    <property type="evidence" value="ECO:0007669"/>
    <property type="project" value="Ensembl"/>
</dbReference>
<dbReference type="GO" id="GO:0001709">
    <property type="term" value="P:cell fate determination"/>
    <property type="evidence" value="ECO:0000316"/>
    <property type="project" value="MGI"/>
</dbReference>
<dbReference type="GO" id="GO:0009957">
    <property type="term" value="P:epidermal cell fate specification"/>
    <property type="evidence" value="ECO:0000316"/>
    <property type="project" value="MGI"/>
</dbReference>
<dbReference type="GO" id="GO:0008544">
    <property type="term" value="P:epidermis development"/>
    <property type="evidence" value="ECO:0000315"/>
    <property type="project" value="MGI"/>
</dbReference>
<dbReference type="GO" id="GO:0042633">
    <property type="term" value="P:hair cycle"/>
    <property type="evidence" value="ECO:0000315"/>
    <property type="project" value="MGI"/>
</dbReference>
<dbReference type="GO" id="GO:0045606">
    <property type="term" value="P:positive regulation of epidermal cell differentiation"/>
    <property type="evidence" value="ECO:0000316"/>
    <property type="project" value="MGI"/>
</dbReference>
<dbReference type="GO" id="GO:0001558">
    <property type="term" value="P:regulation of cell growth"/>
    <property type="evidence" value="ECO:0007669"/>
    <property type="project" value="Ensembl"/>
</dbReference>
<dbReference type="GO" id="GO:0043588">
    <property type="term" value="P:skin development"/>
    <property type="evidence" value="ECO:0000315"/>
    <property type="project" value="MGI"/>
</dbReference>
<dbReference type="FunFam" id="1.20.1640.10:FF:000007">
    <property type="entry name" value="Protein patched homolog 1"/>
    <property type="match status" value="1"/>
</dbReference>
<dbReference type="FunFam" id="1.20.1640.10:FF:000003">
    <property type="entry name" value="protein patched homolog 1"/>
    <property type="match status" value="1"/>
</dbReference>
<dbReference type="Gene3D" id="1.20.1640.10">
    <property type="entry name" value="Multidrug efflux transporter AcrB transmembrane domain"/>
    <property type="match status" value="2"/>
</dbReference>
<dbReference type="InterPro" id="IPR053958">
    <property type="entry name" value="HMGCR/SNAP/NPC1-like_SSD"/>
</dbReference>
<dbReference type="InterPro" id="IPR000731">
    <property type="entry name" value="SSD"/>
</dbReference>
<dbReference type="InterPro" id="IPR004766">
    <property type="entry name" value="TM_rcpt_patched"/>
</dbReference>
<dbReference type="NCBIfam" id="TIGR00918">
    <property type="entry name" value="2A060602"/>
    <property type="match status" value="1"/>
</dbReference>
<dbReference type="PANTHER" id="PTHR46022">
    <property type="entry name" value="PROTEIN PATCHED"/>
    <property type="match status" value="1"/>
</dbReference>
<dbReference type="PANTHER" id="PTHR46022:SF3">
    <property type="entry name" value="PROTEIN PATCHED HOMOLOG 2"/>
    <property type="match status" value="1"/>
</dbReference>
<dbReference type="Pfam" id="PF12349">
    <property type="entry name" value="Sterol-sensing"/>
    <property type="match status" value="1"/>
</dbReference>
<dbReference type="SUPFAM" id="SSF82866">
    <property type="entry name" value="Multidrug efflux transporter AcrB transmembrane domain"/>
    <property type="match status" value="2"/>
</dbReference>
<dbReference type="PROSITE" id="PS50156">
    <property type="entry name" value="SSD"/>
    <property type="match status" value="1"/>
</dbReference>
<accession>O35595</accession>
<accession>A2AE82</accession>
<accession>Q546T0</accession>
<reference key="1">
    <citation type="journal article" date="1998" name="Nat. Genet.">
        <title>Ptch2, a second mouse Patched gene is co-expressed with Sonic hedgehog.</title>
        <authorList>
            <person name="Motoyama J."/>
            <person name="Takabatake T."/>
            <person name="Takeshima K."/>
            <person name="Hui C.-C."/>
        </authorList>
    </citation>
    <scope>NUCLEOTIDE SEQUENCE</scope>
    <source>
        <tissue>Embryo</tissue>
    </source>
</reference>
<reference key="2">
    <citation type="journal article" date="2002" name="Cytogenet. Genome Res.">
        <title>Genomic structure and refined chromosomal localization of the mouse Ptch2 gene.</title>
        <authorList>
            <person name="Froehlich L."/>
            <person name="Zhanquin L."/>
            <person name="Beier D.R."/>
            <person name="Lanske B."/>
        </authorList>
    </citation>
    <scope>NUCLEOTIDE SEQUENCE [GENOMIC DNA]</scope>
    <source>
        <strain>129/SvJ</strain>
        <tissue>Liver</tissue>
    </source>
</reference>
<reference key="3">
    <citation type="journal article" date="2009" name="PLoS Biol.">
        <title>Lineage-specific biology revealed by a finished genome assembly of the mouse.</title>
        <authorList>
            <person name="Church D.M."/>
            <person name="Goodstadt L."/>
            <person name="Hillier L.W."/>
            <person name="Zody M.C."/>
            <person name="Goldstein S."/>
            <person name="She X."/>
            <person name="Bult C.J."/>
            <person name="Agarwala R."/>
            <person name="Cherry J.L."/>
            <person name="DiCuccio M."/>
            <person name="Hlavina W."/>
            <person name="Kapustin Y."/>
            <person name="Meric P."/>
            <person name="Maglott D."/>
            <person name="Birtle Z."/>
            <person name="Marques A.C."/>
            <person name="Graves T."/>
            <person name="Zhou S."/>
            <person name="Teague B."/>
            <person name="Potamousis K."/>
            <person name="Churas C."/>
            <person name="Place M."/>
            <person name="Herschleb J."/>
            <person name="Runnheim R."/>
            <person name="Forrest D."/>
            <person name="Amos-Landgraf J."/>
            <person name="Schwartz D.C."/>
            <person name="Cheng Z."/>
            <person name="Lindblad-Toh K."/>
            <person name="Eichler E.E."/>
            <person name="Ponting C.P."/>
        </authorList>
    </citation>
    <scope>NUCLEOTIDE SEQUENCE [LARGE SCALE GENOMIC DNA]</scope>
    <source>
        <strain>C57BL/6J</strain>
    </source>
</reference>
<reference key="4">
    <citation type="journal article" date="1997" name="FEBS Lett.">
        <title>Hedgehog and patched gene expression in adult ocular tissues.</title>
        <authorList>
            <person name="Takabatake T."/>
            <person name="Ogawa M."/>
            <person name="Takahashi T.C."/>
            <person name="Mizuno M."/>
            <person name="Okamoto M."/>
            <person name="Takeshima K."/>
        </authorList>
    </citation>
    <scope>NUCLEOTIDE SEQUENCE [MRNA] OF 196-446</scope>
    <source>
        <strain>BALB/cJ</strain>
        <tissue>Neuroretina</tissue>
    </source>
</reference>
<sequence length="1182" mass="128586">MVRPLSLGELPPSYTPPARSSAPHILAGSLQAPLWLRAYFQGLLFSLGCRIQKHCGKVLFLGLVAFGALALGLRVAVIETDLEQLWVEVGSRVSQELHYTKEKLGEEAAYTSQMLIQTAHQEGGNVLTPEALDLHLQAALTASKVQVSLYGKSWDLNKICYKSGVPLIENGMIERMIEKLFPCVILTPLDCFWEGAKLQGGSAYLPGRPDIQWTNLDPQQLLEELGPFASLEGFRELLDKAQVGQAYVGRPCLDPDDPHCPPSAPNRHSRQAPNVAQELSGGCHGFSHKFMHWQEELLLGGTARDLQGQLLRAEALQSTFLLMSPRQLYEHFRGDYQTHDIGWSEEQASMVLQAWQRRFVQLAQEALPANASQQIHAFSSTTLDDILRAFSEVSTTRVVGGYLLMLAYACVTMLRWDCAQSQGAVGLAGVLLVALAVASGLGLCALLGITFNAATTQVLPFLALGIGVDDIFLLAHAFTKAPPDTPLPERMGECLRSTGTSVALTSVNNMVAFFMAALVPIPALRAFSLQAAIVVGCNFAAVMLVFPAILSLDLRRRHRQRLDVLCCFSSPCSAQVIQMLPQELGDRAVPVGIAHLTATVQAFTHCEASSQHVVTILPPQAHLLSPASDPLGSELYSPGGSTRDLLSQEEGTGPQAACRPLLCAHWTLAHFARYQFAPLLLQTRAKALVLLFFGALLGLSLYGATLVQDGLALTDVVPRGTKEHAFLSAQLRYFSLYEVALVTQGGFDYAHSQRALFDLHQRFSSLKAVLPPPATQAPRTWLHYYRSWLQGIQAAFDQDWASGRITCHSYRNGSEDGALAYKLLIQTGNAQEPLDFSQLTTRKLVDKEGLIPPELFYMGLTVWVSSDPLGLAASQANFYPPPPEWLHDKYDTTGENLRIPAAQPLEFAQFPFLLHGLQKTADFVEAIEGARAACTEAGQAGVHAYPSGSPFLFWEQYLGLRRCFLLAVCILLVCTFLVCALLLLSPWTAGLIVLVLAMMTVELFGIMGFLGIKLSAIPVVILVASIGIGVEFTVHVALGFLTSHGSRNLRAASALEQTFAPVTDGAVSTLLGLLMLAGSNFDFIIRYFFVVLTVLTLLGLLHGLLLLPVLLSILGPPPQVVQVYKESPQTLNSAAPQRGGLRWDRPPTLPQSFARVTTSMTVALHPPPLPGAYVHPASEEPT</sequence>
<gene>
    <name type="primary">Ptch2</name>
</gene>
<name>PTC2_MOUSE</name>
<proteinExistence type="evidence at transcript level"/>
<evidence type="ECO:0000250" key="1">
    <source>
        <dbReference type="UniProtKB" id="Q9Y6C5"/>
    </source>
</evidence>
<evidence type="ECO:0000255" key="2"/>
<evidence type="ECO:0000255" key="3">
    <source>
        <dbReference type="PROSITE-ProRule" id="PRU00199"/>
    </source>
</evidence>
<evidence type="ECO:0000305" key="4"/>